<organism>
    <name type="scientific">Teredinibacter turnerae (strain ATCC 39867 / T7901)</name>
    <dbReference type="NCBI Taxonomy" id="377629"/>
    <lineage>
        <taxon>Bacteria</taxon>
        <taxon>Pseudomonadati</taxon>
        <taxon>Pseudomonadota</taxon>
        <taxon>Gammaproteobacteria</taxon>
        <taxon>Cellvibrionales</taxon>
        <taxon>Cellvibrionaceae</taxon>
        <taxon>Teredinibacter</taxon>
    </lineage>
</organism>
<proteinExistence type="inferred from homology"/>
<reference key="1">
    <citation type="journal article" date="2009" name="PLoS ONE">
        <title>The complete genome of Teredinibacter turnerae T7901: an intracellular endosymbiont of marine wood-boring bivalves (shipworms).</title>
        <authorList>
            <person name="Yang J.C."/>
            <person name="Madupu R."/>
            <person name="Durkin A.S."/>
            <person name="Ekborg N.A."/>
            <person name="Pedamallu C.S."/>
            <person name="Hostetler J.B."/>
            <person name="Radune D."/>
            <person name="Toms B.S."/>
            <person name="Henrissat B."/>
            <person name="Coutinho P.M."/>
            <person name="Schwarz S."/>
            <person name="Field L."/>
            <person name="Trindade-Silva A.E."/>
            <person name="Soares C.A.G."/>
            <person name="Elshahawi S."/>
            <person name="Hanora A."/>
            <person name="Schmidt E.W."/>
            <person name="Haygood M.G."/>
            <person name="Posfai J."/>
            <person name="Benner J."/>
            <person name="Madinger C."/>
            <person name="Nove J."/>
            <person name="Anton B."/>
            <person name="Chaudhary K."/>
            <person name="Foster J."/>
            <person name="Holman A."/>
            <person name="Kumar S."/>
            <person name="Lessard P.A."/>
            <person name="Luyten Y.A."/>
            <person name="Slatko B."/>
            <person name="Wood N."/>
            <person name="Wu B."/>
            <person name="Teplitski M."/>
            <person name="Mougous J.D."/>
            <person name="Ward N."/>
            <person name="Eisen J.A."/>
            <person name="Badger J.H."/>
            <person name="Distel D.L."/>
        </authorList>
    </citation>
    <scope>NUCLEOTIDE SEQUENCE [LARGE SCALE GENOMIC DNA]</scope>
    <source>
        <strain>ATCC 39867 / T7901</strain>
    </source>
</reference>
<evidence type="ECO:0000255" key="1">
    <source>
        <dbReference type="HAMAP-Rule" id="MF_00303"/>
    </source>
</evidence>
<dbReference type="EC" id="5.2.1.8" evidence="1"/>
<dbReference type="EMBL" id="CP001614">
    <property type="protein sequence ID" value="ACR11232.1"/>
    <property type="molecule type" value="Genomic_DNA"/>
</dbReference>
<dbReference type="RefSeq" id="WP_015817344.1">
    <property type="nucleotide sequence ID" value="NC_012997.1"/>
</dbReference>
<dbReference type="SMR" id="C5BTI9"/>
<dbReference type="STRING" id="377629.TERTU_1623"/>
<dbReference type="KEGG" id="ttu:TERTU_1623"/>
<dbReference type="eggNOG" id="COG0544">
    <property type="taxonomic scope" value="Bacteria"/>
</dbReference>
<dbReference type="HOGENOM" id="CLU_033058_2_0_6"/>
<dbReference type="OrthoDB" id="9767721at2"/>
<dbReference type="Proteomes" id="UP000009080">
    <property type="component" value="Chromosome"/>
</dbReference>
<dbReference type="GO" id="GO:0005737">
    <property type="term" value="C:cytoplasm"/>
    <property type="evidence" value="ECO:0007669"/>
    <property type="project" value="UniProtKB-SubCell"/>
</dbReference>
<dbReference type="GO" id="GO:0003755">
    <property type="term" value="F:peptidyl-prolyl cis-trans isomerase activity"/>
    <property type="evidence" value="ECO:0007669"/>
    <property type="project" value="UniProtKB-UniRule"/>
</dbReference>
<dbReference type="GO" id="GO:0044183">
    <property type="term" value="F:protein folding chaperone"/>
    <property type="evidence" value="ECO:0007669"/>
    <property type="project" value="TreeGrafter"/>
</dbReference>
<dbReference type="GO" id="GO:0043022">
    <property type="term" value="F:ribosome binding"/>
    <property type="evidence" value="ECO:0007669"/>
    <property type="project" value="TreeGrafter"/>
</dbReference>
<dbReference type="GO" id="GO:0051083">
    <property type="term" value="P:'de novo' cotranslational protein folding"/>
    <property type="evidence" value="ECO:0007669"/>
    <property type="project" value="TreeGrafter"/>
</dbReference>
<dbReference type="GO" id="GO:0051301">
    <property type="term" value="P:cell division"/>
    <property type="evidence" value="ECO:0007669"/>
    <property type="project" value="UniProtKB-KW"/>
</dbReference>
<dbReference type="GO" id="GO:0061077">
    <property type="term" value="P:chaperone-mediated protein folding"/>
    <property type="evidence" value="ECO:0007669"/>
    <property type="project" value="TreeGrafter"/>
</dbReference>
<dbReference type="GO" id="GO:0015031">
    <property type="term" value="P:protein transport"/>
    <property type="evidence" value="ECO:0007669"/>
    <property type="project" value="UniProtKB-UniRule"/>
</dbReference>
<dbReference type="GO" id="GO:0043335">
    <property type="term" value="P:protein unfolding"/>
    <property type="evidence" value="ECO:0007669"/>
    <property type="project" value="TreeGrafter"/>
</dbReference>
<dbReference type="FunFam" id="3.10.50.40:FF:000001">
    <property type="entry name" value="Trigger factor"/>
    <property type="match status" value="1"/>
</dbReference>
<dbReference type="Gene3D" id="3.10.50.40">
    <property type="match status" value="1"/>
</dbReference>
<dbReference type="Gene3D" id="3.30.70.1050">
    <property type="entry name" value="Trigger factor ribosome-binding domain"/>
    <property type="match status" value="1"/>
</dbReference>
<dbReference type="Gene3D" id="1.10.3120.10">
    <property type="entry name" value="Trigger factor, C-terminal domain"/>
    <property type="match status" value="1"/>
</dbReference>
<dbReference type="HAMAP" id="MF_00303">
    <property type="entry name" value="Trigger_factor_Tig"/>
    <property type="match status" value="1"/>
</dbReference>
<dbReference type="InterPro" id="IPR046357">
    <property type="entry name" value="PPIase_dom_sf"/>
</dbReference>
<dbReference type="InterPro" id="IPR001179">
    <property type="entry name" value="PPIase_FKBP_dom"/>
</dbReference>
<dbReference type="InterPro" id="IPR005215">
    <property type="entry name" value="Trig_fac"/>
</dbReference>
<dbReference type="InterPro" id="IPR008880">
    <property type="entry name" value="Trigger_fac_C"/>
</dbReference>
<dbReference type="InterPro" id="IPR037041">
    <property type="entry name" value="Trigger_fac_C_sf"/>
</dbReference>
<dbReference type="InterPro" id="IPR008881">
    <property type="entry name" value="Trigger_fac_ribosome-bd_bac"/>
</dbReference>
<dbReference type="InterPro" id="IPR036611">
    <property type="entry name" value="Trigger_fac_ribosome-bd_sf"/>
</dbReference>
<dbReference type="InterPro" id="IPR027304">
    <property type="entry name" value="Trigger_fact/SurA_dom_sf"/>
</dbReference>
<dbReference type="NCBIfam" id="TIGR00115">
    <property type="entry name" value="tig"/>
    <property type="match status" value="1"/>
</dbReference>
<dbReference type="PANTHER" id="PTHR30560">
    <property type="entry name" value="TRIGGER FACTOR CHAPERONE AND PEPTIDYL-PROLYL CIS/TRANS ISOMERASE"/>
    <property type="match status" value="1"/>
</dbReference>
<dbReference type="PANTHER" id="PTHR30560:SF3">
    <property type="entry name" value="TRIGGER FACTOR-LIKE PROTEIN TIG, CHLOROPLASTIC"/>
    <property type="match status" value="1"/>
</dbReference>
<dbReference type="Pfam" id="PF00254">
    <property type="entry name" value="FKBP_C"/>
    <property type="match status" value="1"/>
</dbReference>
<dbReference type="Pfam" id="PF05698">
    <property type="entry name" value="Trigger_C"/>
    <property type="match status" value="1"/>
</dbReference>
<dbReference type="Pfam" id="PF05697">
    <property type="entry name" value="Trigger_N"/>
    <property type="match status" value="1"/>
</dbReference>
<dbReference type="PIRSF" id="PIRSF003095">
    <property type="entry name" value="Trigger_factor"/>
    <property type="match status" value="1"/>
</dbReference>
<dbReference type="SUPFAM" id="SSF54534">
    <property type="entry name" value="FKBP-like"/>
    <property type="match status" value="1"/>
</dbReference>
<dbReference type="SUPFAM" id="SSF109998">
    <property type="entry name" value="Triger factor/SurA peptide-binding domain-like"/>
    <property type="match status" value="1"/>
</dbReference>
<dbReference type="SUPFAM" id="SSF102735">
    <property type="entry name" value="Trigger factor ribosome-binding domain"/>
    <property type="match status" value="1"/>
</dbReference>
<dbReference type="PROSITE" id="PS50059">
    <property type="entry name" value="FKBP_PPIASE"/>
    <property type="match status" value="1"/>
</dbReference>
<accession>C5BTI9</accession>
<feature type="chain" id="PRO_1000205001" description="Trigger factor">
    <location>
        <begin position="1"/>
        <end position="441"/>
    </location>
</feature>
<feature type="domain" description="PPIase FKBP-type" evidence="1">
    <location>
        <begin position="161"/>
        <end position="246"/>
    </location>
</feature>
<protein>
    <recommendedName>
        <fullName evidence="1">Trigger factor</fullName>
        <shortName evidence="1">TF</shortName>
        <ecNumber evidence="1">5.2.1.8</ecNumber>
    </recommendedName>
    <alternativeName>
        <fullName evidence="1">PPIase</fullName>
    </alternativeName>
</protein>
<keyword id="KW-0131">Cell cycle</keyword>
<keyword id="KW-0132">Cell division</keyword>
<keyword id="KW-0143">Chaperone</keyword>
<keyword id="KW-0963">Cytoplasm</keyword>
<keyword id="KW-0413">Isomerase</keyword>
<keyword id="KW-1185">Reference proteome</keyword>
<keyword id="KW-0697">Rotamase</keyword>
<name>TIG_TERTT</name>
<gene>
    <name evidence="1" type="primary">tig</name>
    <name type="ordered locus">TERTU_1623</name>
</gene>
<sequence length="441" mass="49535">MQVSIETTSGLERRLTVGIPAEIIDQEVEKRLKQAAKTVRINGFRKGKVPFKVVKQRFGEGVRQEVLGDTIQRSFYDAVRQESVRPAGQPSIEPKQMDEGKDVEYIATFEVYPEVELKELDNIEITRYDAEITDADIDKMVETLQKGQSSWEPVKRKSKKGDKVTIDFLGKIDGEAFDGGEAKGHQLELGSGSMIPGFEKGITGMKAGETQPINVTFPDDYHVEDLRSKDAEFEITVHEVLGEKLPKLDEEFYAKFGVTEGGEEKFREEVKSNMEREKQRAIKAKVKEQVMNALLESNSVDLPAALVQSEIGAMRQQMVQQYGQSAQNLDLQALLPDDMFKAQAERRTALALIVSEVVKKYEVKADKDIVRSLIEEAASTYEDPQEVINYYYSNEQLLANVEAAALEEKVVELLLEKATVTDATVSYDEVIKPQEPQAEEA</sequence>
<comment type="function">
    <text evidence="1">Involved in protein export. Acts as a chaperone by maintaining the newly synthesized protein in an open conformation. Functions as a peptidyl-prolyl cis-trans isomerase.</text>
</comment>
<comment type="catalytic activity">
    <reaction evidence="1">
        <text>[protein]-peptidylproline (omega=180) = [protein]-peptidylproline (omega=0)</text>
        <dbReference type="Rhea" id="RHEA:16237"/>
        <dbReference type="Rhea" id="RHEA-COMP:10747"/>
        <dbReference type="Rhea" id="RHEA-COMP:10748"/>
        <dbReference type="ChEBI" id="CHEBI:83833"/>
        <dbReference type="ChEBI" id="CHEBI:83834"/>
        <dbReference type="EC" id="5.2.1.8"/>
    </reaction>
</comment>
<comment type="subcellular location">
    <subcellularLocation>
        <location>Cytoplasm</location>
    </subcellularLocation>
    <text evidence="1">About half TF is bound to the ribosome near the polypeptide exit tunnel while the other half is free in the cytoplasm.</text>
</comment>
<comment type="domain">
    <text evidence="1">Consists of 3 domains; the N-terminus binds the ribosome, the middle domain has PPIase activity, while the C-terminus has intrinsic chaperone activity on its own.</text>
</comment>
<comment type="similarity">
    <text evidence="1">Belongs to the FKBP-type PPIase family. Tig subfamily.</text>
</comment>